<accession>B7LFK7</accession>
<feature type="chain" id="PRO_1000148332" description="Protein SprT">
    <location>
        <begin position="1"/>
        <end position="165"/>
    </location>
</feature>
<feature type="domain" description="SprT-like" evidence="1">
    <location>
        <begin position="20"/>
        <end position="163"/>
    </location>
</feature>
<feature type="active site" evidence="1">
    <location>
        <position position="79"/>
    </location>
</feature>
<feature type="binding site" evidence="1">
    <location>
        <position position="78"/>
    </location>
    <ligand>
        <name>Zn(2+)</name>
        <dbReference type="ChEBI" id="CHEBI:29105"/>
    </ligand>
</feature>
<feature type="binding site" evidence="1">
    <location>
        <position position="82"/>
    </location>
    <ligand>
        <name>Zn(2+)</name>
        <dbReference type="ChEBI" id="CHEBI:29105"/>
    </ligand>
</feature>
<sequence length="165" mass="19321">MKTSRLPIAIQQAVMRRLREKLAQANLKLGRNYPEPKLSYTQRGTSAGTAWLESYEIRLNPVLLLENSEAFIEEVVPHELAHLLVWKHFGRVAPHGKEWKWMMESVLGVPARRTHQFELQSVRRNTFPYRCKCQEHQLTVRRHNRVVRGEAVYRCVHCGEQLVAK</sequence>
<reference key="1">
    <citation type="journal article" date="2009" name="PLoS Genet.">
        <title>Organised genome dynamics in the Escherichia coli species results in highly diverse adaptive paths.</title>
        <authorList>
            <person name="Touchon M."/>
            <person name="Hoede C."/>
            <person name="Tenaillon O."/>
            <person name="Barbe V."/>
            <person name="Baeriswyl S."/>
            <person name="Bidet P."/>
            <person name="Bingen E."/>
            <person name="Bonacorsi S."/>
            <person name="Bouchier C."/>
            <person name="Bouvet O."/>
            <person name="Calteau A."/>
            <person name="Chiapello H."/>
            <person name="Clermont O."/>
            <person name="Cruveiller S."/>
            <person name="Danchin A."/>
            <person name="Diard M."/>
            <person name="Dossat C."/>
            <person name="Karoui M.E."/>
            <person name="Frapy E."/>
            <person name="Garry L."/>
            <person name="Ghigo J.M."/>
            <person name="Gilles A.M."/>
            <person name="Johnson J."/>
            <person name="Le Bouguenec C."/>
            <person name="Lescat M."/>
            <person name="Mangenot S."/>
            <person name="Martinez-Jehanne V."/>
            <person name="Matic I."/>
            <person name="Nassif X."/>
            <person name="Oztas S."/>
            <person name="Petit M.A."/>
            <person name="Pichon C."/>
            <person name="Rouy Z."/>
            <person name="Ruf C.S."/>
            <person name="Schneider D."/>
            <person name="Tourret J."/>
            <person name="Vacherie B."/>
            <person name="Vallenet D."/>
            <person name="Medigue C."/>
            <person name="Rocha E.P.C."/>
            <person name="Denamur E."/>
        </authorList>
    </citation>
    <scope>NUCLEOTIDE SEQUENCE [LARGE SCALE GENOMIC DNA]</scope>
    <source>
        <strain>55989 / EAEC</strain>
    </source>
</reference>
<keyword id="KW-0963">Cytoplasm</keyword>
<keyword id="KW-0479">Metal-binding</keyword>
<keyword id="KW-1185">Reference proteome</keyword>
<keyword id="KW-0862">Zinc</keyword>
<dbReference type="EMBL" id="CU928145">
    <property type="protein sequence ID" value="CAU99229.1"/>
    <property type="molecule type" value="Genomic_DNA"/>
</dbReference>
<dbReference type="RefSeq" id="WP_000858396.1">
    <property type="nucleotide sequence ID" value="NC_011748.1"/>
</dbReference>
<dbReference type="SMR" id="B7LFK7"/>
<dbReference type="KEGG" id="eck:EC55989_3237"/>
<dbReference type="HOGENOM" id="CLU_113336_0_1_6"/>
<dbReference type="Proteomes" id="UP000000746">
    <property type="component" value="Chromosome"/>
</dbReference>
<dbReference type="GO" id="GO:0005737">
    <property type="term" value="C:cytoplasm"/>
    <property type="evidence" value="ECO:0007669"/>
    <property type="project" value="UniProtKB-SubCell"/>
</dbReference>
<dbReference type="GO" id="GO:0008270">
    <property type="term" value="F:zinc ion binding"/>
    <property type="evidence" value="ECO:0007669"/>
    <property type="project" value="UniProtKB-UniRule"/>
</dbReference>
<dbReference type="GO" id="GO:0006950">
    <property type="term" value="P:response to stress"/>
    <property type="evidence" value="ECO:0007669"/>
    <property type="project" value="UniProtKB-ARBA"/>
</dbReference>
<dbReference type="Gene3D" id="3.30.2010.10">
    <property type="entry name" value="Metalloproteases ('zincins'), catalytic domain"/>
    <property type="match status" value="1"/>
</dbReference>
<dbReference type="HAMAP" id="MF_00746">
    <property type="entry name" value="SprT"/>
    <property type="match status" value="1"/>
</dbReference>
<dbReference type="InterPro" id="IPR006640">
    <property type="entry name" value="SprT-like_domain"/>
</dbReference>
<dbReference type="InterPro" id="IPR035240">
    <property type="entry name" value="SprT_Zn_ribbon"/>
</dbReference>
<dbReference type="InterPro" id="IPR023483">
    <property type="entry name" value="Uncharacterised_SprT"/>
</dbReference>
<dbReference type="NCBIfam" id="NF003421">
    <property type="entry name" value="PRK04860.1"/>
    <property type="match status" value="1"/>
</dbReference>
<dbReference type="PANTHER" id="PTHR38773">
    <property type="entry name" value="PROTEIN SPRT"/>
    <property type="match status" value="1"/>
</dbReference>
<dbReference type="PANTHER" id="PTHR38773:SF1">
    <property type="entry name" value="PROTEIN SPRT"/>
    <property type="match status" value="1"/>
</dbReference>
<dbReference type="Pfam" id="PF10263">
    <property type="entry name" value="SprT-like"/>
    <property type="match status" value="1"/>
</dbReference>
<dbReference type="Pfam" id="PF17283">
    <property type="entry name" value="Zn_ribbon_SprT"/>
    <property type="match status" value="1"/>
</dbReference>
<dbReference type="SMART" id="SM00731">
    <property type="entry name" value="SprT"/>
    <property type="match status" value="1"/>
</dbReference>
<dbReference type="PROSITE" id="PS00142">
    <property type="entry name" value="ZINC_PROTEASE"/>
    <property type="match status" value="1"/>
</dbReference>
<name>SPRT_ECO55</name>
<gene>
    <name evidence="1" type="primary">sprT</name>
    <name type="ordered locus">EC55989_3237</name>
</gene>
<proteinExistence type="inferred from homology"/>
<comment type="cofactor">
    <cofactor evidence="1">
        <name>Zn(2+)</name>
        <dbReference type="ChEBI" id="CHEBI:29105"/>
    </cofactor>
    <text evidence="1">Binds 1 zinc ion.</text>
</comment>
<comment type="subcellular location">
    <subcellularLocation>
        <location evidence="1">Cytoplasm</location>
    </subcellularLocation>
</comment>
<comment type="similarity">
    <text evidence="1">Belongs to the SprT family.</text>
</comment>
<protein>
    <recommendedName>
        <fullName evidence="1">Protein SprT</fullName>
    </recommendedName>
</protein>
<organism>
    <name type="scientific">Escherichia coli (strain 55989 / EAEC)</name>
    <dbReference type="NCBI Taxonomy" id="585055"/>
    <lineage>
        <taxon>Bacteria</taxon>
        <taxon>Pseudomonadati</taxon>
        <taxon>Pseudomonadota</taxon>
        <taxon>Gammaproteobacteria</taxon>
        <taxon>Enterobacterales</taxon>
        <taxon>Enterobacteriaceae</taxon>
        <taxon>Escherichia</taxon>
    </lineage>
</organism>
<evidence type="ECO:0000255" key="1">
    <source>
        <dbReference type="HAMAP-Rule" id="MF_00746"/>
    </source>
</evidence>